<protein>
    <recommendedName>
        <fullName>Chromogranin-A</fullName>
    </recommendedName>
</protein>
<proteinExistence type="evidence at protein level"/>
<feature type="chain" id="PRO_0000144712" description="Chromogranin-A">
    <location>
        <begin position="1"/>
        <end position="104" status="greater than"/>
    </location>
</feature>
<feature type="disulfide bond" evidence="1">
    <location>
        <begin position="17"/>
        <end position="38"/>
    </location>
</feature>
<feature type="non-consecutive residues" evidence="2">
    <location>
        <begin position="76"/>
        <end position="77"/>
    </location>
</feature>
<feature type="non-terminal residue">
    <location>
        <position position="104"/>
    </location>
</feature>
<organism>
    <name type="scientific">Struthio camelus</name>
    <name type="common">Common ostrich</name>
    <dbReference type="NCBI Taxonomy" id="8801"/>
    <lineage>
        <taxon>Eukaryota</taxon>
        <taxon>Metazoa</taxon>
        <taxon>Chordata</taxon>
        <taxon>Craniata</taxon>
        <taxon>Vertebrata</taxon>
        <taxon>Euteleostomi</taxon>
        <taxon>Archelosauria</taxon>
        <taxon>Archosauria</taxon>
        <taxon>Dinosauria</taxon>
        <taxon>Saurischia</taxon>
        <taxon>Theropoda</taxon>
        <taxon>Coelurosauria</taxon>
        <taxon>Aves</taxon>
        <taxon>Palaeognathae</taxon>
        <taxon>Struthioniformes</taxon>
        <taxon>Struthionidae</taxon>
        <taxon>Struthio</taxon>
    </lineage>
</organism>
<sequence length="104" mass="11674">LPVTNNMNKGDTKVMKCIVEVISDTLSKPNPLPISEECLETLRGDERIISILRHQNLLKELQEIAVQGANERTQQQRRTEDQELESLAAIEAELESVAHSLQAL</sequence>
<keyword id="KW-0968">Cytoplasmic vesicle</keyword>
<keyword id="KW-0903">Direct protein sequencing</keyword>
<keyword id="KW-1015">Disulfide bond</keyword>
<keyword id="KW-0964">Secreted</keyword>
<accession>P33716</accession>
<evidence type="ECO:0000255" key="1"/>
<evidence type="ECO:0000305" key="2"/>
<reference key="1">
    <citation type="journal article" date="1990" name="Peptides">
        <title>The ostrich pituitary contains a major peptide homologous to mammalian chromogranin A(1-76).</title>
        <authorList>
            <person name="Lazure C."/>
            <person name="Paquet L."/>
            <person name="Litthauer D."/>
            <person name="Naude R.J."/>
            <person name="Oelofsen W."/>
            <person name="Chretien M."/>
        </authorList>
    </citation>
    <scope>PROTEIN SEQUENCE</scope>
    <source>
        <tissue>Pituitary</tissue>
    </source>
</reference>
<comment type="function">
    <text>Chromogranin A probably has a paracrine role in the regulation of secretion or maturation.</text>
</comment>
<comment type="subunit">
    <text>Dimer.</text>
</comment>
<comment type="subcellular location">
    <subcellularLocation>
        <location>Cytoplasmic vesicle</location>
        <location>Secretory vesicle</location>
    </subcellularLocation>
    <subcellularLocation>
        <location>Secreted</location>
    </subcellularLocation>
</comment>
<comment type="similarity">
    <text evidence="2">Belongs to the chromogranin/secretogranin protein family.</text>
</comment>
<gene>
    <name type="primary">CHGA</name>
</gene>
<name>CMGA_STRCA</name>
<dbReference type="PIR" id="A60417">
    <property type="entry name" value="A60417"/>
</dbReference>
<dbReference type="SMR" id="P33716"/>
<dbReference type="GO" id="GO:0042583">
    <property type="term" value="C:chromaffin granule"/>
    <property type="evidence" value="ECO:0007669"/>
    <property type="project" value="TreeGrafter"/>
</dbReference>
<dbReference type="GO" id="GO:0005615">
    <property type="term" value="C:extracellular space"/>
    <property type="evidence" value="ECO:0007669"/>
    <property type="project" value="TreeGrafter"/>
</dbReference>
<dbReference type="GO" id="GO:0030141">
    <property type="term" value="C:secretory granule"/>
    <property type="evidence" value="ECO:0000250"/>
    <property type="project" value="UniProtKB"/>
</dbReference>
<dbReference type="GO" id="GO:0030133">
    <property type="term" value="C:transport vesicle"/>
    <property type="evidence" value="ECO:0007669"/>
    <property type="project" value="UniProtKB-SubCell"/>
</dbReference>
<dbReference type="GO" id="GO:0086030">
    <property type="term" value="P:adenylate cyclase-activating adrenergic receptor signaling pathway involved in cardiac muscle relaxation"/>
    <property type="evidence" value="ECO:0007669"/>
    <property type="project" value="TreeGrafter"/>
</dbReference>
<dbReference type="GO" id="GO:0042742">
    <property type="term" value="P:defense response to bacterium"/>
    <property type="evidence" value="ECO:0007669"/>
    <property type="project" value="TreeGrafter"/>
</dbReference>
<dbReference type="GO" id="GO:0033604">
    <property type="term" value="P:negative regulation of catecholamine secretion"/>
    <property type="evidence" value="ECO:0007669"/>
    <property type="project" value="TreeGrafter"/>
</dbReference>
<dbReference type="GO" id="GO:0046676">
    <property type="term" value="P:negative regulation of insulin secretion"/>
    <property type="evidence" value="ECO:0007669"/>
    <property type="project" value="TreeGrafter"/>
</dbReference>
<dbReference type="InterPro" id="IPR001819">
    <property type="entry name" value="Chromogranin_AB"/>
</dbReference>
<dbReference type="InterPro" id="IPR018054">
    <property type="entry name" value="Chromogranin_CS"/>
</dbReference>
<dbReference type="InterPro" id="IPR001990">
    <property type="entry name" value="Granin"/>
</dbReference>
<dbReference type="PANTHER" id="PTHR10583">
    <property type="entry name" value="CHROMOGRANIN"/>
    <property type="match status" value="1"/>
</dbReference>
<dbReference type="PANTHER" id="PTHR10583:SF1">
    <property type="entry name" value="CHROMOGRANIN-A"/>
    <property type="match status" value="1"/>
</dbReference>
<dbReference type="Pfam" id="PF01271">
    <property type="entry name" value="Granin"/>
    <property type="match status" value="2"/>
</dbReference>
<dbReference type="PRINTS" id="PR00659">
    <property type="entry name" value="CHROMOGRANIN"/>
</dbReference>
<dbReference type="PROSITE" id="PS00422">
    <property type="entry name" value="GRANINS_1"/>
    <property type="match status" value="1"/>
</dbReference>
<dbReference type="PROSITE" id="PS00423">
    <property type="entry name" value="GRANINS_2"/>
    <property type="match status" value="1"/>
</dbReference>